<feature type="signal peptide" evidence="5">
    <location>
        <begin position="1"/>
        <end position="33"/>
    </location>
</feature>
<feature type="chain" id="PRO_0000037473" description="Envelope glycoprotein">
    <location>
        <begin position="34"/>
        <end position="677"/>
    </location>
</feature>
<feature type="chain" id="PRO_0000037474" description="GP1" evidence="1">
    <location>
        <begin position="34"/>
        <end position="502"/>
    </location>
</feature>
<feature type="chain" id="PRO_0000037475" description="GP2" evidence="1">
    <location>
        <begin position="503"/>
        <end position="677"/>
    </location>
</feature>
<feature type="chain" id="PRO_0000245062" description="Shed GP" evidence="1">
    <location>
        <begin position="503"/>
        <end position="638"/>
    </location>
</feature>
<feature type="topological domain" description="Extracellular" evidence="5">
    <location>
        <begin position="34"/>
        <end position="651"/>
    </location>
</feature>
<feature type="transmembrane region" description="Helical" evidence="5">
    <location>
        <begin position="652"/>
        <end position="672"/>
    </location>
</feature>
<feature type="topological domain" description="Cytoplasmic" evidence="5">
    <location>
        <begin position="673"/>
        <end position="677"/>
    </location>
</feature>
<feature type="region of interest" description="Receptor-binding" evidence="1">
    <location>
        <begin position="55"/>
        <end position="202"/>
    </location>
</feature>
<feature type="region of interest" description="Mucin-like region" evidence="1">
    <location>
        <begin position="306"/>
        <end position="486"/>
    </location>
</feature>
<feature type="region of interest" description="Disordered" evidence="6">
    <location>
        <begin position="315"/>
        <end position="349"/>
    </location>
</feature>
<feature type="region of interest" description="Disordered" evidence="6">
    <location>
        <begin position="370"/>
        <end position="482"/>
    </location>
</feature>
<feature type="region of interest" description="Disordered" evidence="6">
    <location>
        <begin position="489"/>
        <end position="508"/>
    </location>
</feature>
<feature type="region of interest" description="Fusion peptide" evidence="1">
    <location>
        <begin position="525"/>
        <end position="540"/>
    </location>
</feature>
<feature type="coiled-coil region" evidence="5">
    <location>
        <begin position="555"/>
        <end position="596"/>
    </location>
</feature>
<feature type="coiled-coil region" evidence="5">
    <location>
        <begin position="616"/>
        <end position="635"/>
    </location>
</feature>
<feature type="compositionally biased region" description="Polar residues" evidence="6">
    <location>
        <begin position="315"/>
        <end position="326"/>
    </location>
</feature>
<feature type="compositionally biased region" description="Polar residues" evidence="6">
    <location>
        <begin position="370"/>
        <end position="421"/>
    </location>
</feature>
<feature type="compositionally biased region" description="Polar residues" evidence="6">
    <location>
        <begin position="429"/>
        <end position="472"/>
    </location>
</feature>
<feature type="site" description="Involved in receptor recognition and/or post-binding events" evidence="5">
    <location>
        <position position="58"/>
    </location>
</feature>
<feature type="site" description="Involved in receptor recognition and/or post-binding events" evidence="5">
    <location>
        <position position="64"/>
    </location>
</feature>
<feature type="site" description="Involved in receptor recognition and/or post-binding events" evidence="5">
    <location>
        <position position="89"/>
    </location>
</feature>
<feature type="site" description="Involved in receptor recognition and/or post-binding events" evidence="5">
    <location>
        <position position="96"/>
    </location>
</feature>
<feature type="site" description="Involved in receptor recognition and/or post-binding events" evidence="5">
    <location>
        <position position="171"/>
    </location>
</feature>
<feature type="site" description="Cleavage; by host furin" evidence="1">
    <location>
        <begin position="502"/>
        <end position="503"/>
    </location>
</feature>
<feature type="site" description="Cleavage; by host ADAM17" evidence="1">
    <location>
        <begin position="638"/>
        <end position="639"/>
    </location>
</feature>
<feature type="lipid moiety-binding region" description="S-palmitoyl cysteine; by host" evidence="3">
    <location>
        <position position="671"/>
    </location>
</feature>
<feature type="lipid moiety-binding region" description="S-palmitoyl cysteine; by host" evidence="3">
    <location>
        <position position="673"/>
    </location>
</feature>
<feature type="glycosylation site" description="N-linked (GlcNAc...) asparagine; by host" evidence="5">
    <location>
        <position position="41"/>
    </location>
</feature>
<feature type="glycosylation site" description="N-linked (GlcNAc...) asparagine; by host" evidence="5">
    <location>
        <position position="205"/>
    </location>
</feature>
<feature type="glycosylation site" description="N-linked (GlcNAc...) asparagine; by host" evidence="5">
    <location>
        <position position="239"/>
    </location>
</feature>
<feature type="glycosylation site" description="N-linked (GlcNAc...) asparagine; by host" evidence="5">
    <location>
        <position position="258"/>
    </location>
</feature>
<feature type="glycosylation site" description="N-linked (GlcNAc...) asparagine; by host" evidence="5">
    <location>
        <position position="269"/>
    </location>
</feature>
<feature type="glycosylation site" description="N-linked (GlcNAc...) asparagine; by host" evidence="5">
    <location>
        <position position="297"/>
    </location>
</feature>
<feature type="glycosylation site" description="N-linked (GlcNAc...) asparagine; by host" evidence="5">
    <location>
        <position position="317"/>
    </location>
</feature>
<feature type="glycosylation site" description="N-linked (GlcNAc...) asparagine; by host" evidence="5">
    <location>
        <position position="318"/>
    </location>
</feature>
<feature type="glycosylation site" description="N-linked (GlcNAc...) asparagine; by host" evidence="5">
    <location>
        <position position="339"/>
    </location>
</feature>
<feature type="glycosylation site" description="N-linked (GlcNAc...) asparagine; by host" evidence="5">
    <location>
        <position position="406"/>
    </location>
</feature>
<feature type="glycosylation site" description="N-linked (GlcNAc...) asparagine; by host" evidence="5">
    <location>
        <position position="420"/>
    </location>
</feature>
<feature type="glycosylation site" description="N-linked (GlcNAc...) asparagine; by host" evidence="5">
    <location>
        <position position="435"/>
    </location>
</feature>
<feature type="glycosylation site" description="N-linked (GlcNAc...) asparagine; by host" evidence="5">
    <location>
        <position position="463"/>
    </location>
</feature>
<feature type="glycosylation site" description="N-linked (GlcNAc...) asparagine; by host" evidence="5">
    <location>
        <position position="564"/>
    </location>
</feature>
<feature type="glycosylation site" description="N-linked (GlcNAc...) asparagine; by host" evidence="5">
    <location>
        <position position="619"/>
    </location>
</feature>
<feature type="disulfide bond" description="Interchain (between GP1 and GP2 chains)" evidence="1">
    <location>
        <begin position="54"/>
        <end position="610"/>
    </location>
</feature>
<feature type="disulfide bond" evidence="5">
    <location>
        <begin position="109"/>
        <end position="136"/>
    </location>
</feature>
<feature type="disulfide bond" evidence="5">
    <location>
        <begin position="122"/>
        <end position="148"/>
    </location>
</feature>
<feature type="disulfide bond" evidence="5">
    <location>
        <begin position="512"/>
        <end position="557"/>
    </location>
</feature>
<feature type="disulfide bond" evidence="2">
    <location>
        <begin position="602"/>
        <end position="609"/>
    </location>
</feature>
<accession>Q89853</accession>
<gene>
    <name type="primary">GP</name>
</gene>
<name>VGP_EBORS</name>
<protein>
    <recommendedName>
        <fullName>Envelope glycoprotein</fullName>
    </recommendedName>
    <alternativeName>
        <fullName>GP1,2</fullName>
        <shortName>GP</shortName>
    </alternativeName>
    <component>
        <recommendedName>
            <fullName>GP1</fullName>
        </recommendedName>
    </component>
    <component>
        <recommendedName>
            <fullName>GP2</fullName>
        </recommendedName>
    </component>
    <component>
        <recommendedName>
            <fullName>Shed GP</fullName>
        </recommendedName>
        <alternativeName>
            <fullName>GP1,2-delta</fullName>
        </alternativeName>
    </component>
</protein>
<keyword id="KW-1165">Clathrin-mediated endocytosis of virus by host</keyword>
<keyword id="KW-0165">Cleavage on pair of basic residues</keyword>
<keyword id="KW-0175">Coiled coil</keyword>
<keyword id="KW-1015">Disulfide bond</keyword>
<keyword id="KW-1170">Fusion of virus membrane with host endosomal membrane</keyword>
<keyword id="KW-1168">Fusion of virus membrane with host membrane</keyword>
<keyword id="KW-0325">Glycoprotein</keyword>
<keyword id="KW-1032">Host cell membrane</keyword>
<keyword id="KW-1043">Host membrane</keyword>
<keyword id="KW-0945">Host-virus interaction</keyword>
<keyword id="KW-1090">Inhibition of host innate immune response by virus</keyword>
<keyword id="KW-1084">Inhibition of host tetherin by virus</keyword>
<keyword id="KW-0449">Lipoprotein</keyword>
<keyword id="KW-0472">Membrane</keyword>
<keyword id="KW-0564">Palmitate</keyword>
<keyword id="KW-0691">RNA editing</keyword>
<keyword id="KW-0964">Secreted</keyword>
<keyword id="KW-0732">Signal</keyword>
<keyword id="KW-0812">Transmembrane</keyword>
<keyword id="KW-1133">Transmembrane helix</keyword>
<keyword id="KW-1161">Viral attachment to host cell</keyword>
<keyword id="KW-1234">Viral attachment to host entry receptor</keyword>
<keyword id="KW-0261">Viral envelope protein</keyword>
<keyword id="KW-0899">Viral immunoevasion</keyword>
<keyword id="KW-1162">Viral penetration into host cytoplasm</keyword>
<keyword id="KW-0946">Virion</keyword>
<keyword id="KW-1164">Virus endocytosis by host</keyword>
<keyword id="KW-1160">Virus entry into host cell</keyword>
<comment type="function">
    <molecule>Envelope glycoprotein</molecule>
    <text evidence="3">Trimeric GP1,2 complexes form the virion surface spikes and mediate the viral entry processes, with GP1 acting as the receptor-binding subunit and GP2 as the membrane fusion subunit. At later times of infection, down-regulates the expression of various host cell surface molecules that are essential for immune surveillance and cell adhesion. Down-modulates several integrins including ITGA1, ITGA2, ITGA3, ITGA4, ITGA5, ITGA6, ITGAV and ITGB1. This decrease in cell adhesion molecules may lead to cell detachment, contributing to the disruption of blood vessel integrity and hemorrhages developed during infection (cytotoxicity). Interacts with host TLR4 and thereby stimulates the differentiation and activation of monocytes leading to bystander death of T-lymphocytes. Down-regulates as well the function of host natural killer cells. Counteracts the antiviral effect of host BST2/tetherin that restricts release of progeny virions from infected cells. However, cooperates with VP40 and host BST2 to activate canonical NF-kappa-B pathway in a manner dependent on neddylation.</text>
</comment>
<comment type="function">
    <molecule>Shed GP</molecule>
    <text evidence="3">Functions as a decoy for anti-GP1,2 antibodies thereby contributing to viral immune evasion. Interacts and activates host macrophages and dendritic cells inducing up-regulation of cytokine transcription. This effect is mediated throught activation of host TLR4.</text>
</comment>
<comment type="function">
    <molecule>GP1</molecule>
    <text evidence="2 3 4">Responsible for binding to the receptor(s) on target cells. Interacts with CD209/DC-SIGN and CLEC4M/DC-SIGNR which act as cofactors for virus entry into dendritic cells (DCs) and endothelial cells (By similarity). Binding to the macrophage specific lectin CLEC10A also seems to enhance virus infectivity (By similarity). Interaction with FOLR1/folate receptor alpha may be a cofactor for virus entry in some cell types, although results are contradictory (By similarity). Members of the Tyro3 receptor tyrosine kinase family also seem to be cell entry factors in filovirus infection (By similarity). Once attached, the virions are internalized through clathrin-dependent endocytosis and/or macropinocytosis. After internalization of the virus into the endosomes of the host cell, proteolysis of GP1 by two cysteine proteases, CTSB/cathepsin B and CTSL/cathepsin L removes the glycan cap and allows GP1 binding to the host entry receptor NPC1. NPC1-binding, Ca(2+) and acidic pH induce a conformational change of GP2, which unmasks its fusion peptide and permit membranes fusion (By similarity).</text>
</comment>
<comment type="function">
    <molecule>GP2</molecule>
    <text evidence="3">Acts as a class I viral fusion protein. Under the current model, the protein has at least 3 conformational states: pre-fusion native state, pre-hairpin intermediate state, and post-fusion hairpin state. During viral and target cell membrane fusion, the coiled coil regions (heptad repeats) assume a trimer-of-hairpins structure, positioning the fusion peptide in close proximity to the C-terminal region of the ectodomain. The formation of this structure appears to drive apposition and subsequent fusion of viral and target cell membranes. Responsible for penetration of the virus into the cell cytoplasm by mediating the fusion of the membrane of the endocytosed virus particle with the endosomal membrane. Low pH in endosomes induces an irreversible conformational change in GP2, releasing the fusion hydrophobic peptide.</text>
</comment>
<comment type="subunit">
    <molecule>Envelope glycoprotein</molecule>
    <text evidence="3">Homotrimer; each monomer consists of a GP1 and a GP2 subunit linked by disulfide bonds. The resulting peplomers (GP1,2) protrude from the virus surface as spikes. Interacts with host integrin alpha-V/ITGAV. Interacts with host CLEC10A. Binds also to host CD209 and CLEC4M/DC-SIGN(R). Interacts with host FOLR1. Interacts with BST2; this interaction inhibits the antiviral effect of BST2 and this allows viral release from infected cells. Interacts with host FCN1; this interaction enhances viral entry. Interacts with host TLR4; this interaction induces cell death in T-lymphocytes or proinflammatory cytokines and SOCS1 production in monocytes.</text>
</comment>
<comment type="subunit">
    <molecule>GP1</molecule>
    <text evidence="3">Interacts with host entry receptor NPC1.</text>
</comment>
<comment type="subunit">
    <molecule>Shed GP</molecule>
    <text evidence="3">GP1 and GP2delta are part of GP1,2delta soluble complexes released by ectodomain shedding.</text>
</comment>
<comment type="subcellular location">
    <molecule>GP2</molecule>
    <subcellularLocation>
        <location evidence="3">Virion membrane</location>
        <topology evidence="5">Single-pass type I membrane protein</topology>
    </subcellularLocation>
    <subcellularLocation>
        <location evidence="3">Host cell membrane</location>
        <topology evidence="5">Single-pass type I membrane protein</topology>
    </subcellularLocation>
    <text evidence="3">In the cell, localizes to the plasma membrane lipid rafts, which probably represent the assembly and budding site.</text>
</comment>
<comment type="subcellular location">
    <molecule>GP1</molecule>
    <subcellularLocation>
        <location evidence="3">Virion membrane</location>
        <topology evidence="3">Peripheral membrane protein</topology>
    </subcellularLocation>
    <subcellularLocation>
        <location evidence="3">Host cell membrane</location>
        <topology evidence="3">Peripheral membrane protein</topology>
    </subcellularLocation>
    <text evidence="3">GP1 is not anchored to the viral envelope, but forms a disulfid-linked complex with the extravirion surface GP2. In the cell, both GP1 and GP2 localize to the plasma membrane lipid rafts, which probably represent the assembly and budding site. GP1 can also be shed after proteolytic processing.</text>
</comment>
<comment type="subcellular location">
    <molecule>Shed GP</molecule>
    <subcellularLocation>
        <location evidence="3">Secreted</location>
    </subcellularLocation>
    <text evidence="3">GP2-delta bound to GP1 (GP1,2-delta) is produced by proteolytic cleavage of GP1,2 by host ADAM17 and shed by the virus.</text>
</comment>
<comment type="domain">
    <text evidence="1">The mucin-like region seems to be involved in the cytotoxic function. This region is also involved in binding to human CLEC10A (By similarity).</text>
</comment>
<comment type="domain">
    <text evidence="1">The coiled coil regions play a role in oligomerization and fusion activity.</text>
</comment>
<comment type="PTM">
    <text evidence="1">The signal peptide region modulates GP's high mannose glycosylation, thereby determining the efficiency of the interactions with DC-SIGN(R).</text>
</comment>
<comment type="PTM">
    <text evidence="1">N-glycosylated.</text>
</comment>
<comment type="PTM">
    <text evidence="1">O-glycosylated in the mucin-like region.</text>
</comment>
<comment type="PTM">
    <text evidence="1">Palmitoylation of GP2 is not required for its function.</text>
</comment>
<comment type="PTM">
    <text evidence="1">Specific enzymatic cleavages in vivo yield mature proteins. The precursor is processed into GP1 and GP2 by host cell furin in the trans Golgi, and maybe by other host proteases, to yield the mature GP1 and GP2 proteins. The cleavage site corresponds to the furin optimal cleavage sequence [KR]-X-[KR]-R. This cleavage does not seem to be required for function. After the internalization of the virus into cell endosomes, GP1 C-terminus is removed by the endosomal proteases cathepsin B, cathepsin L, or both, leaving a 19-kDa N-terminal fragment which is further digested by cathepsin B. Proteolytic processing of GP1,2 by host ADAM17 can remove the transmembrane anchor of GP2 and leads to shedding of complexes consisting in GP1 and truncated GP2 (GP1,2delta) (By similarity).</text>
</comment>
<comment type="RNA editing">
    <location>
        <position position="296" evidence="7"/>
    </location>
    <text>Partially edited. RNA editing at this position consists of an insertion of one adenine nucleotide. The sequence displayed here is the full-length transmembrane glycoprotein, derived from the edited RNA. The unedited RNA gives rise to the small secreted glycoprotein (AC Q89569).</text>
</comment>
<comment type="miscellaneous">
    <text evidence="1">Filoviruses entry requires functional lipid rafts at the host cell surface.</text>
</comment>
<comment type="miscellaneous">
    <text>Essential for infectivity, as it is the sole viral protein expressed at the virion surface.</text>
</comment>
<comment type="similarity">
    <text evidence="8">Belongs to the filoviruses glycoprotein family.</text>
</comment>
<reference key="1">
    <citation type="journal article" date="1996" name="Proc. Natl. Acad. Sci. U.S.A.">
        <title>The virion glycoproteins of Ebola viruses are encoded in two reading frames and are expressed through transcriptional editing.</title>
        <authorList>
            <person name="Sanchez A."/>
            <person name="Trappier S.G."/>
            <person name="Mahy B.W.J."/>
            <person name="Peters C.J."/>
            <person name="Nichol S.T."/>
        </authorList>
    </citation>
    <scope>NUCLEOTIDE SEQUENCE [GENOMIC RNA]</scope>
    <scope>RNA EDITING</scope>
</reference>
<organismHost>
    <name type="scientific">Homo sapiens</name>
    <name type="common">Human</name>
    <dbReference type="NCBI Taxonomy" id="9606"/>
</organismHost>
<organismHost>
    <name type="scientific">Macaca fascicularis</name>
    <name type="common">Crab-eating macaque</name>
    <name type="synonym">Cynomolgus monkey</name>
    <dbReference type="NCBI Taxonomy" id="9541"/>
</organismHost>
<organismHost>
    <name type="scientific">Pteropodinae</name>
    <dbReference type="NCBI Taxonomy" id="77225"/>
</organismHost>
<organismHost>
    <name type="scientific">Sus scrofa</name>
    <name type="common">Pig</name>
    <dbReference type="NCBI Taxonomy" id="9823"/>
</organismHost>
<sequence length="677" mass="74524">MGSGYQLLQLPRERFRKTSFLVWVIILFQRAISMPLGIVTNSTLKATEIDQLVCRDKLSSTSQLKSVGLNLEGNGIATDVPSATKRWGFRSGVPPKVVSYEAGEWAENCYNLEIKKSDGSECLPLPPDGVRGFPRCRYVHKVQGTGPCPGDLAFHKNGAFFLYDRLASTVIYRGTTFTEGVVAFLILSEPKKHFWKATPAHEPVNTTDDSTSYYMTLTLSYEMSNFGGKESNTLFKVDNHTYVQLDRPHTPQFLVQLNETLRRNNRLSNSTGRLTWTLDPKIEPDVGEWAFWETKKNFSQQLHGENLHFQILSTHTNNSSDQSPAGTVQGKISYHPPTNNSELVPTDSPPVVSVLTAGRTEEMSTQGLTNGETITGFTANPMTTTIAPSPTMTSEVDNNVPSEQPNNTASIEDSPPSASNETIDHSEMNPIQGSNNSAQSPQTKTTPAPTASPMTQDPQETANSSKLGTSPGSAAEPSQPGFTINTVSKVADSLSPTRKQKRSVRQNTANKCNPDLHYWTAVDEGAAVGLAWIPYFGPAAEGIYIEGVMHNQNGLICGLRQLANETTQALQLFLRATTELRTYSLLNRKAIDFLLQRWGGTCRILGPSCCIEPHDWTKNITDEINQIKHDFIDNPLPDHGDDLNLWTGWRQWIPAGIGIIGVIIAIIALLCICKILC</sequence>
<organism>
    <name type="scientific">Reston ebolavirus (strain Siena/Philippine-92)</name>
    <name type="common">REBOV</name>
    <name type="synonym">Reston Ebola virus</name>
    <dbReference type="NCBI Taxonomy" id="129004"/>
    <lineage>
        <taxon>Viruses</taxon>
        <taxon>Riboviria</taxon>
        <taxon>Orthornavirae</taxon>
        <taxon>Negarnaviricota</taxon>
        <taxon>Haploviricotina</taxon>
        <taxon>Monjiviricetes</taxon>
        <taxon>Mononegavirales</taxon>
        <taxon>Filoviridae</taxon>
        <taxon>Orthoebolavirus</taxon>
        <taxon>Orthoebolavirus restonense</taxon>
        <taxon>Reston ebolavirus</taxon>
    </lineage>
</organism>
<dbReference type="EMBL" id="U23416">
    <property type="protein sequence ID" value="AAC54889.1"/>
    <property type="molecule type" value="Genomic_RNA"/>
</dbReference>
<dbReference type="EMBL" id="U23417">
    <property type="protein sequence ID" value="AAC54891.1"/>
    <property type="molecule type" value="Genomic_RNA"/>
</dbReference>
<dbReference type="SMR" id="Q89853"/>
<dbReference type="BindingDB" id="Q89853"/>
<dbReference type="GlyCosmos" id="Q89853">
    <property type="glycosylation" value="15 sites, No reported glycans"/>
</dbReference>
<dbReference type="GO" id="GO:0005576">
    <property type="term" value="C:extracellular region"/>
    <property type="evidence" value="ECO:0007669"/>
    <property type="project" value="UniProtKB-SubCell"/>
</dbReference>
<dbReference type="GO" id="GO:0020002">
    <property type="term" value="C:host cell plasma membrane"/>
    <property type="evidence" value="ECO:0007669"/>
    <property type="project" value="UniProtKB-SubCell"/>
</dbReference>
<dbReference type="GO" id="GO:0016020">
    <property type="term" value="C:membrane"/>
    <property type="evidence" value="ECO:0007669"/>
    <property type="project" value="UniProtKB-KW"/>
</dbReference>
<dbReference type="GO" id="GO:0019031">
    <property type="term" value="C:viral envelope"/>
    <property type="evidence" value="ECO:0007669"/>
    <property type="project" value="UniProtKB-KW"/>
</dbReference>
<dbReference type="GO" id="GO:0055036">
    <property type="term" value="C:virion membrane"/>
    <property type="evidence" value="ECO:0007669"/>
    <property type="project" value="UniProtKB-SubCell"/>
</dbReference>
<dbReference type="GO" id="GO:0075512">
    <property type="term" value="P:clathrin-dependent endocytosis of virus by host cell"/>
    <property type="evidence" value="ECO:0007669"/>
    <property type="project" value="UniProtKB-KW"/>
</dbReference>
<dbReference type="GO" id="GO:0098670">
    <property type="term" value="P:entry receptor-mediated virion attachment to host cell"/>
    <property type="evidence" value="ECO:0007669"/>
    <property type="project" value="UniProtKB-KW"/>
</dbReference>
<dbReference type="GO" id="GO:0039654">
    <property type="term" value="P:fusion of virus membrane with host endosome membrane"/>
    <property type="evidence" value="ECO:0007669"/>
    <property type="project" value="UniProtKB-KW"/>
</dbReference>
<dbReference type="GO" id="GO:0052170">
    <property type="term" value="P:symbiont-mediated suppression of host innate immune response"/>
    <property type="evidence" value="ECO:0007669"/>
    <property type="project" value="UniProtKB-KW"/>
</dbReference>
<dbReference type="GO" id="GO:0039587">
    <property type="term" value="P:symbiont-mediated-mediated suppression of host tetherin activity"/>
    <property type="evidence" value="ECO:0007669"/>
    <property type="project" value="UniProtKB-KW"/>
</dbReference>
<dbReference type="CDD" id="cd09850">
    <property type="entry name" value="Ebola-like_HR1-HR2"/>
    <property type="match status" value="1"/>
</dbReference>
<dbReference type="Gene3D" id="1.10.287.210">
    <property type="match status" value="1"/>
</dbReference>
<dbReference type="InterPro" id="IPR054584">
    <property type="entry name" value="Ebola-like_HR1-HR2"/>
</dbReference>
<dbReference type="InterPro" id="IPR014625">
    <property type="entry name" value="GPC_FiloV"/>
</dbReference>
<dbReference type="InterPro" id="IPR002561">
    <property type="entry name" value="GPC_filovir-type_extra_dom"/>
</dbReference>
<dbReference type="Pfam" id="PF22307">
    <property type="entry name" value="Ebola-like_HR1-HR2"/>
    <property type="match status" value="1"/>
</dbReference>
<dbReference type="Pfam" id="PF01611">
    <property type="entry name" value="Filo_glycop"/>
    <property type="match status" value="1"/>
</dbReference>
<dbReference type="PIRSF" id="PIRSF036874">
    <property type="entry name" value="GPC_FiloV"/>
    <property type="match status" value="1"/>
</dbReference>
<dbReference type="SUPFAM" id="SSF58069">
    <property type="entry name" value="Virus ectodomain"/>
    <property type="match status" value="1"/>
</dbReference>
<evidence type="ECO:0000250" key="1"/>
<evidence type="ECO:0000250" key="2">
    <source>
        <dbReference type="UniProtKB" id="O11457"/>
    </source>
</evidence>
<evidence type="ECO:0000250" key="3">
    <source>
        <dbReference type="UniProtKB" id="Q05320"/>
    </source>
</evidence>
<evidence type="ECO:0000250" key="4">
    <source>
        <dbReference type="UniProtKB" id="Q66814"/>
    </source>
</evidence>
<evidence type="ECO:0000255" key="5"/>
<evidence type="ECO:0000256" key="6">
    <source>
        <dbReference type="SAM" id="MobiDB-lite"/>
    </source>
</evidence>
<evidence type="ECO:0000269" key="7">
    <source>
    </source>
</evidence>
<evidence type="ECO:0000305" key="8"/>
<proteinExistence type="inferred from homology"/>